<organism>
    <name type="scientific">Xenopus tropicalis</name>
    <name type="common">Western clawed frog</name>
    <name type="synonym">Silurana tropicalis</name>
    <dbReference type="NCBI Taxonomy" id="8364"/>
    <lineage>
        <taxon>Eukaryota</taxon>
        <taxon>Metazoa</taxon>
        <taxon>Chordata</taxon>
        <taxon>Craniata</taxon>
        <taxon>Vertebrata</taxon>
        <taxon>Euteleostomi</taxon>
        <taxon>Amphibia</taxon>
        <taxon>Batrachia</taxon>
        <taxon>Anura</taxon>
        <taxon>Pipoidea</taxon>
        <taxon>Pipidae</taxon>
        <taxon>Xenopodinae</taxon>
        <taxon>Xenopus</taxon>
        <taxon>Silurana</taxon>
    </lineage>
</organism>
<gene>
    <name type="primary">letm1</name>
</gene>
<dbReference type="EMBL" id="BC121318">
    <property type="protein sequence ID" value="AAI21319.1"/>
    <property type="molecule type" value="mRNA"/>
</dbReference>
<dbReference type="RefSeq" id="NP_001072793.1">
    <property type="nucleotide sequence ID" value="NM_001079325.1"/>
</dbReference>
<dbReference type="SMR" id="Q0VA06"/>
<dbReference type="FunCoup" id="Q0VA06">
    <property type="interactions" value="2932"/>
</dbReference>
<dbReference type="STRING" id="8364.ENSXETP00000013503"/>
<dbReference type="PaxDb" id="8364-ENSXETP00000059944"/>
<dbReference type="GeneID" id="780254"/>
<dbReference type="KEGG" id="xtr:780254"/>
<dbReference type="AGR" id="Xenbase:XB-GENE-954420"/>
<dbReference type="CTD" id="3954"/>
<dbReference type="Xenbase" id="XB-GENE-954420">
    <property type="gene designation" value="letm1"/>
</dbReference>
<dbReference type="eggNOG" id="KOG1043">
    <property type="taxonomic scope" value="Eukaryota"/>
</dbReference>
<dbReference type="HOGENOM" id="CLU_686163_0_0_1"/>
<dbReference type="InParanoid" id="Q0VA06"/>
<dbReference type="OrthoDB" id="624114at2759"/>
<dbReference type="Reactome" id="R-XTR-9013408">
    <property type="pathway name" value="RHOG GTPase cycle"/>
</dbReference>
<dbReference type="Proteomes" id="UP000008143">
    <property type="component" value="Chromosome 1"/>
</dbReference>
<dbReference type="Bgee" id="ENSXETG00000032769">
    <property type="expression patterns" value="Expressed in testis and 12 other cell types or tissues"/>
</dbReference>
<dbReference type="GO" id="GO:0005743">
    <property type="term" value="C:mitochondrial inner membrane"/>
    <property type="evidence" value="ECO:0000250"/>
    <property type="project" value="UniProtKB"/>
</dbReference>
<dbReference type="GO" id="GO:0005509">
    <property type="term" value="F:calcium ion binding"/>
    <property type="evidence" value="ECO:0007669"/>
    <property type="project" value="InterPro"/>
</dbReference>
<dbReference type="GO" id="GO:0015369">
    <property type="term" value="F:calcium:proton antiporter activity"/>
    <property type="evidence" value="ECO:0000250"/>
    <property type="project" value="UniProtKB"/>
</dbReference>
<dbReference type="GO" id="GO:0043022">
    <property type="term" value="F:ribosome binding"/>
    <property type="evidence" value="ECO:0007669"/>
    <property type="project" value="InterPro"/>
</dbReference>
<dbReference type="GO" id="GO:0099093">
    <property type="term" value="P:calcium export from the mitochondrion"/>
    <property type="evidence" value="ECO:0000250"/>
    <property type="project" value="UniProtKB"/>
</dbReference>
<dbReference type="GO" id="GO:0006816">
    <property type="term" value="P:calcium ion transport"/>
    <property type="evidence" value="ECO:0000250"/>
    <property type="project" value="UniProtKB"/>
</dbReference>
<dbReference type="GO" id="GO:0007007">
    <property type="term" value="P:inner mitochondrial membrane organization"/>
    <property type="evidence" value="ECO:0000250"/>
    <property type="project" value="UniProtKB"/>
</dbReference>
<dbReference type="GO" id="GO:0051560">
    <property type="term" value="P:mitochondrial calcium ion homeostasis"/>
    <property type="evidence" value="ECO:0000250"/>
    <property type="project" value="UniProtKB"/>
</dbReference>
<dbReference type="GO" id="GO:0006851">
    <property type="term" value="P:mitochondrial calcium ion transmembrane transport"/>
    <property type="evidence" value="ECO:0000250"/>
    <property type="project" value="UniProtKB"/>
</dbReference>
<dbReference type="GO" id="GO:0006813">
    <property type="term" value="P:potassium ion transport"/>
    <property type="evidence" value="ECO:0007669"/>
    <property type="project" value="UniProtKB-KW"/>
</dbReference>
<dbReference type="GO" id="GO:0034214">
    <property type="term" value="P:protein hexamerization"/>
    <property type="evidence" value="ECO:0000250"/>
    <property type="project" value="UniProtKB"/>
</dbReference>
<dbReference type="GO" id="GO:0051260">
    <property type="term" value="P:protein homooligomerization"/>
    <property type="evidence" value="ECO:0000250"/>
    <property type="project" value="UniProtKB"/>
</dbReference>
<dbReference type="FunFam" id="1.10.238.10:FF:000290">
    <property type="entry name" value="LETM1 and EF-hand domain-containing protein 1, mitochondrial"/>
    <property type="match status" value="1"/>
</dbReference>
<dbReference type="Gene3D" id="1.10.238.10">
    <property type="entry name" value="EF-hand"/>
    <property type="match status" value="1"/>
</dbReference>
<dbReference type="InterPro" id="IPR011992">
    <property type="entry name" value="EF-hand-dom_pair"/>
</dbReference>
<dbReference type="InterPro" id="IPR018247">
    <property type="entry name" value="EF_Hand_1_Ca_BS"/>
</dbReference>
<dbReference type="InterPro" id="IPR002048">
    <property type="entry name" value="EF_hand_dom"/>
</dbReference>
<dbReference type="InterPro" id="IPR033122">
    <property type="entry name" value="LETM1-like_RBD"/>
</dbReference>
<dbReference type="InterPro" id="IPR044202">
    <property type="entry name" value="LETM1/MDM38-like"/>
</dbReference>
<dbReference type="PANTHER" id="PTHR14009">
    <property type="entry name" value="LEUCINE ZIPPER-EF-HAND CONTAINING TRANSMEMBRANE PROTEIN"/>
    <property type="match status" value="1"/>
</dbReference>
<dbReference type="PANTHER" id="PTHR14009:SF8">
    <property type="entry name" value="MITOCHONDRIAL PROTON_CALCIUM EXCHANGER PROTEIN"/>
    <property type="match status" value="1"/>
</dbReference>
<dbReference type="Pfam" id="PF07766">
    <property type="entry name" value="LETM1_RBD"/>
    <property type="match status" value="1"/>
</dbReference>
<dbReference type="SUPFAM" id="SSF47473">
    <property type="entry name" value="EF-hand"/>
    <property type="match status" value="1"/>
</dbReference>
<dbReference type="PROSITE" id="PS00018">
    <property type="entry name" value="EF_HAND_1"/>
    <property type="match status" value="1"/>
</dbReference>
<dbReference type="PROSITE" id="PS50222">
    <property type="entry name" value="EF_HAND_2"/>
    <property type="match status" value="1"/>
</dbReference>
<dbReference type="PROSITE" id="PS51758">
    <property type="entry name" value="LETM1_RBD"/>
    <property type="match status" value="1"/>
</dbReference>
<feature type="transit peptide" description="Mitochondrion" evidence="3">
    <location>
        <begin position="1"/>
        <end position="117"/>
    </location>
</feature>
<feature type="chain" id="PRO_0000380704" description="Mitochondrial proton/calcium exchanger protein">
    <location>
        <begin position="118"/>
        <end position="760"/>
    </location>
</feature>
<feature type="topological domain" description="Mitochondrial intermembrane" evidence="1">
    <location>
        <begin position="118"/>
        <end position="210"/>
    </location>
</feature>
<feature type="transmembrane region" description="Helical" evidence="3">
    <location>
        <begin position="211"/>
        <end position="231"/>
    </location>
</feature>
<feature type="topological domain" description="Mitochondrial matrix" evidence="1">
    <location>
        <begin position="232"/>
        <end position="760"/>
    </location>
</feature>
<feature type="domain" description="Letm1 RBD" evidence="5">
    <location>
        <begin position="254"/>
        <end position="555"/>
    </location>
</feature>
<feature type="domain" description="EF-hand" evidence="4">
    <location>
        <begin position="683"/>
        <end position="718"/>
    </location>
</feature>
<feature type="coiled-coil region" evidence="3">
    <location>
        <begin position="463"/>
        <end position="505"/>
    </location>
</feature>
<feature type="coiled-coil region" evidence="3">
    <location>
        <begin position="557"/>
        <end position="657"/>
    </location>
</feature>
<feature type="coiled-coil region" evidence="3">
    <location>
        <begin position="723"/>
        <end position="760"/>
    </location>
</feature>
<feature type="binding site" evidence="4">
    <location>
        <position position="696"/>
    </location>
    <ligand>
        <name>Ca(2+)</name>
        <dbReference type="ChEBI" id="CHEBI:29108"/>
    </ligand>
</feature>
<feature type="binding site" evidence="4">
    <location>
        <position position="698"/>
    </location>
    <ligand>
        <name>Ca(2+)</name>
        <dbReference type="ChEBI" id="CHEBI:29108"/>
    </ligand>
</feature>
<feature type="binding site" evidence="4">
    <location>
        <position position="700"/>
    </location>
    <ligand>
        <name>Ca(2+)</name>
        <dbReference type="ChEBI" id="CHEBI:29108"/>
    </ligand>
</feature>
<feature type="binding site" evidence="4">
    <location>
        <position position="702"/>
    </location>
    <ligand>
        <name>Ca(2+)</name>
        <dbReference type="ChEBI" id="CHEBI:29108"/>
    </ligand>
</feature>
<feature type="binding site" evidence="4">
    <location>
        <position position="707"/>
    </location>
    <ligand>
        <name>Ca(2+)</name>
        <dbReference type="ChEBI" id="CHEBI:29108"/>
    </ligand>
</feature>
<evidence type="ECO:0000250" key="1">
    <source>
        <dbReference type="UniProtKB" id="O95202"/>
    </source>
</evidence>
<evidence type="ECO:0000250" key="2">
    <source>
        <dbReference type="UniProtKB" id="Q9Z2I0"/>
    </source>
</evidence>
<evidence type="ECO:0000255" key="3"/>
<evidence type="ECO:0000255" key="4">
    <source>
        <dbReference type="PROSITE-ProRule" id="PRU00448"/>
    </source>
</evidence>
<evidence type="ECO:0000255" key="5">
    <source>
        <dbReference type="PROSITE-ProRule" id="PRU01094"/>
    </source>
</evidence>
<evidence type="ECO:0000305" key="6"/>
<reference key="1">
    <citation type="submission" date="2006-08" db="EMBL/GenBank/DDBJ databases">
        <authorList>
            <consortium name="NIH - Xenopus Gene Collection (XGC) project"/>
        </authorList>
    </citation>
    <scope>NUCLEOTIDE SEQUENCE [LARGE SCALE MRNA]</scope>
    <source>
        <tissue>Testis</tissue>
    </source>
</reference>
<comment type="function">
    <text evidence="1 2">Plays an important role in maintenance of mitochondrial morphology and in mediating either calcium or potassium/proton antiport (By similarity). Mediates proton-dependent calcium efflux from mitochondrion (By similarity). Also functions as an electroneutral mitochondrial proton/potassium exchanger (By similarity). Required for the maintenance of the tubular shape and cristae organization (By similarity).</text>
</comment>
<comment type="catalytic activity">
    <reaction evidence="1">
        <text>Ca(2+)(in) + 2 H(+)(out) = Ca(2+)(out) + 2 H(+)(in)</text>
        <dbReference type="Rhea" id="RHEA:72199"/>
        <dbReference type="ChEBI" id="CHEBI:15378"/>
        <dbReference type="ChEBI" id="CHEBI:29108"/>
    </reaction>
</comment>
<comment type="catalytic activity">
    <reaction evidence="1">
        <text>K(+)(in) + H(+)(out) = K(+)(out) + H(+)(in)</text>
        <dbReference type="Rhea" id="RHEA:29467"/>
        <dbReference type="ChEBI" id="CHEBI:15378"/>
        <dbReference type="ChEBI" id="CHEBI:29103"/>
    </reaction>
</comment>
<comment type="subunit">
    <text evidence="2">Homohexamer.</text>
</comment>
<comment type="subcellular location">
    <subcellularLocation>
        <location evidence="2">Mitochondrion inner membrane</location>
        <topology evidence="3">Single-pass membrane protein</topology>
    </subcellularLocation>
</comment>
<comment type="similarity">
    <text evidence="6">Belongs to the LETM1 family.</text>
</comment>
<keyword id="KW-0050">Antiport</keyword>
<keyword id="KW-0106">Calcium</keyword>
<keyword id="KW-0109">Calcium transport</keyword>
<keyword id="KW-0175">Coiled coil</keyword>
<keyword id="KW-0406">Ion transport</keyword>
<keyword id="KW-0472">Membrane</keyword>
<keyword id="KW-0479">Metal-binding</keyword>
<keyword id="KW-0496">Mitochondrion</keyword>
<keyword id="KW-0999">Mitochondrion inner membrane</keyword>
<keyword id="KW-0630">Potassium</keyword>
<keyword id="KW-0633">Potassium transport</keyword>
<keyword id="KW-1185">Reference proteome</keyword>
<keyword id="KW-0809">Transit peptide</keyword>
<keyword id="KW-0812">Transmembrane</keyword>
<keyword id="KW-1133">Transmembrane helix</keyword>
<keyword id="KW-0813">Transport</keyword>
<name>LETM1_XENTR</name>
<proteinExistence type="evidence at transcript level"/>
<protein>
    <recommendedName>
        <fullName evidence="6">Mitochondrial proton/calcium exchanger protein</fullName>
    </recommendedName>
    <alternativeName>
        <fullName evidence="1">Electroneutral mitochondrial K(+)/H(+)exchanger</fullName>
        <shortName evidence="1">KHE</shortName>
    </alternativeName>
    <alternativeName>
        <fullName>Leucine zipper-EF-hand-containing transmembrane protein 1</fullName>
    </alternativeName>
</protein>
<sequence length="760" mass="86049">MAALLVRGCALRPSWATRSAPICARGEGMKGNFAESVCLGCTSLRLLNYRNACFRSCTAARPVYVASRKGDNEFLWTDISERRYYKYLSSPASWTALKMGPWDLSVRNLHLSRPLFDDSVVEKSLKSLKDKNKKLEEGGPVYSPVSEVETVKKSLGQKVIDEIKHYYHGFRLLWIDTKIAARMLRQILNGHAMSRRERRQFLRICADLFRLVPFLVFVIVPFMEFLLPVALKLFPNMLPSTFETFSKKEERLKKELRVKLELAKFLQDTIEEIALRNKAAKGDVTAEFATFFQKIRSTGERPSNEEIVRFSKLFEDELTLDNLTRPQLVALCKLLELQSIGTNNFLRFQLTMKLRSIKADDKLIADEGLDSLTVTELQAACRARGMRALGVTEDRLKEQLKQWLELHLDQEIPTSLLLLSRALYLPDTLSPADQLKTTLQTLPESVAKEAQVKVAAVECEKVDNKTKLEATLQEEEAIRKENQEKEMERLADAAKESQQVAAKVDVQSAPEEAISGEMKTATADTAAEPAVAQMSASEQAEILKDTAPVLEGIKGEEITKEEIDILSDACTKLKEQKKLLTKEKEELSELKDDVQEYSEDLQEIKKELSKTGQEKVLQETKASKILTKRVNRMIGQMDKIISELENEEKVLDEHIEKGSVPPVGENLVSINELISIMRHIQKIPEQKLQRIAAALDENKDGKIDLDDVAKVVELIDKEDIDISTSQVAEIMELLQKEEKLAEKEKAKEKVEKEQAAEAQN</sequence>
<accession>Q0VA06</accession>